<comment type="function">
    <text evidence="1">Omega-conotoxins act at presynaptic membranes, they bind and block voltage-gated calcium channels (Cav).</text>
</comment>
<comment type="subcellular location">
    <subcellularLocation>
        <location evidence="4">Secreted</location>
    </subcellularLocation>
</comment>
<comment type="tissue specificity">
    <text evidence="6">Expressed by the venom duct.</text>
</comment>
<comment type="domain">
    <text evidence="2">The presence of a 'disulfide through disulfide knot' structurally defines this protein as a knottin.</text>
</comment>
<comment type="domain">
    <text evidence="5">The cysteine framework is VI/VII (C-C-CC-C-C).</text>
</comment>
<comment type="similarity">
    <text evidence="5">Belongs to the conotoxin O1 superfamily.</text>
</comment>
<dbReference type="EMBL" id="AF146359">
    <property type="protein sequence ID" value="AAD31919.1"/>
    <property type="molecule type" value="mRNA"/>
</dbReference>
<dbReference type="SMR" id="Q9XZL3"/>
<dbReference type="ConoServer" id="873">
    <property type="toxin name" value="TxO6 precursor"/>
</dbReference>
<dbReference type="GO" id="GO:0005576">
    <property type="term" value="C:extracellular region"/>
    <property type="evidence" value="ECO:0007669"/>
    <property type="project" value="UniProtKB-SubCell"/>
</dbReference>
<dbReference type="GO" id="GO:0044231">
    <property type="term" value="C:host cell presynaptic membrane"/>
    <property type="evidence" value="ECO:0007669"/>
    <property type="project" value="UniProtKB-KW"/>
</dbReference>
<dbReference type="GO" id="GO:0005246">
    <property type="term" value="F:calcium channel regulator activity"/>
    <property type="evidence" value="ECO:0007669"/>
    <property type="project" value="UniProtKB-KW"/>
</dbReference>
<dbReference type="GO" id="GO:0008200">
    <property type="term" value="F:ion channel inhibitor activity"/>
    <property type="evidence" value="ECO:0007669"/>
    <property type="project" value="InterPro"/>
</dbReference>
<dbReference type="GO" id="GO:0090729">
    <property type="term" value="F:toxin activity"/>
    <property type="evidence" value="ECO:0007669"/>
    <property type="project" value="UniProtKB-KW"/>
</dbReference>
<dbReference type="InterPro" id="IPR004214">
    <property type="entry name" value="Conotoxin"/>
</dbReference>
<dbReference type="InterPro" id="IPR012321">
    <property type="entry name" value="Conotoxin_omega-typ_CS"/>
</dbReference>
<dbReference type="Pfam" id="PF02950">
    <property type="entry name" value="Conotoxin"/>
    <property type="match status" value="1"/>
</dbReference>
<dbReference type="SUPFAM" id="SSF57059">
    <property type="entry name" value="omega toxin-like"/>
    <property type="match status" value="1"/>
</dbReference>
<dbReference type="PROSITE" id="PS60004">
    <property type="entry name" value="OMEGA_CONOTOXIN"/>
    <property type="match status" value="1"/>
</dbReference>
<feature type="signal peptide" evidence="3">
    <location>
        <begin position="1"/>
        <end position="22"/>
    </location>
</feature>
<feature type="propeptide" id="PRO_0000034960" evidence="1">
    <location>
        <begin position="23"/>
        <end position="50"/>
    </location>
</feature>
<feature type="peptide" id="PRO_0000034961" description="Omega-conotoxin-like TxO6" evidence="4">
    <location>
        <begin position="51"/>
        <end position="82"/>
    </location>
</feature>
<feature type="disulfide bond" evidence="2">
    <location>
        <begin position="53"/>
        <end position="71"/>
    </location>
</feature>
<feature type="disulfide bond" evidence="2">
    <location>
        <begin position="60"/>
        <end position="76"/>
    </location>
</feature>
<feature type="disulfide bond" evidence="2">
    <location>
        <begin position="70"/>
        <end position="81"/>
    </location>
</feature>
<accession>Q9XZL3</accession>
<organism>
    <name type="scientific">Conus textile</name>
    <name type="common">Cloth-of-gold cone</name>
    <dbReference type="NCBI Taxonomy" id="6494"/>
    <lineage>
        <taxon>Eukaryota</taxon>
        <taxon>Metazoa</taxon>
        <taxon>Spiralia</taxon>
        <taxon>Lophotrochozoa</taxon>
        <taxon>Mollusca</taxon>
        <taxon>Gastropoda</taxon>
        <taxon>Caenogastropoda</taxon>
        <taxon>Neogastropoda</taxon>
        <taxon>Conoidea</taxon>
        <taxon>Conidae</taxon>
        <taxon>Conus</taxon>
        <taxon>Cylinder</taxon>
    </lineage>
</organism>
<proteinExistence type="evidence at protein level"/>
<evidence type="ECO:0000250" key="1"/>
<evidence type="ECO:0000250" key="2">
    <source>
        <dbReference type="UniProtKB" id="Q26443"/>
    </source>
</evidence>
<evidence type="ECO:0000255" key="3"/>
<evidence type="ECO:0000269" key="4">
    <source>
    </source>
</evidence>
<evidence type="ECO:0000305" key="5"/>
<evidence type="ECO:0000305" key="6">
    <source>
    </source>
</evidence>
<sequence length="82" mass="9305">MKLTCVVIVAVLFLTAWTLVMADDSNNGLANLFSKSRDEMEDPEAAKLEKNYCQEKWDYCPVPFLGSRYCCDGLFCTLFFCA</sequence>
<reference key="1">
    <citation type="journal article" date="1999" name="Peptides">
        <title>Conopeptides from Conus striatus and Conus textile by cDNA cloning.</title>
        <authorList>
            <person name="Lu B.-S."/>
            <person name="Yu F."/>
            <person name="Zhao D."/>
            <person name="Huang P.-T."/>
            <person name="Huang C.-F."/>
        </authorList>
    </citation>
    <scope>NUCLEOTIDE SEQUENCE [MRNA]</scope>
    <source>
        <tissue>Venom duct</tissue>
    </source>
</reference>
<reference key="2">
    <citation type="journal article" date="2012" name="J. Proteome Res.">
        <title>Constrained de novo sequencing of conotoxins.</title>
        <authorList>
            <person name="Bhatia S."/>
            <person name="Kil Y.J."/>
            <person name="Ueberheide B."/>
            <person name="Chait B.T."/>
            <person name="Tayo L."/>
            <person name="Cruz L."/>
            <person name="Lu B."/>
            <person name="Yates J.R. III"/>
            <person name="Bern M."/>
        </authorList>
    </citation>
    <scope>IDENTIFICATION BY MASS SPECTROMETRY</scope>
    <scope>SUBCELLULAR LOCATION</scope>
    <source>
        <tissue>Venom</tissue>
    </source>
</reference>
<keyword id="KW-0108">Calcium channel impairing toxin</keyword>
<keyword id="KW-1015">Disulfide bond</keyword>
<keyword id="KW-0872">Ion channel impairing toxin</keyword>
<keyword id="KW-0960">Knottin</keyword>
<keyword id="KW-0528">Neurotoxin</keyword>
<keyword id="KW-0638">Presynaptic neurotoxin</keyword>
<keyword id="KW-0964">Secreted</keyword>
<keyword id="KW-0732">Signal</keyword>
<keyword id="KW-0800">Toxin</keyword>
<keyword id="KW-1218">Voltage-gated calcium channel impairing toxin</keyword>
<name>O16O6_CONTE</name>
<protein>
    <recommendedName>
        <fullName>Omega-conotoxin-like TxO6</fullName>
    </recommendedName>
</protein>